<proteinExistence type="inferred from homology"/>
<name>DUT_RHOCS</name>
<gene>
    <name evidence="1" type="primary">dut</name>
    <name type="ordered locus">RC1_3043</name>
</gene>
<accession>B6IVT5</accession>
<reference key="1">
    <citation type="submission" date="2007-03" db="EMBL/GenBank/DDBJ databases">
        <title>Genome sequence of Rhodospirillum centenum.</title>
        <authorList>
            <person name="Touchman J.W."/>
            <person name="Bauer C."/>
            <person name="Blankenship R.E."/>
        </authorList>
    </citation>
    <scope>NUCLEOTIDE SEQUENCE [LARGE SCALE GENOMIC DNA]</scope>
    <source>
        <strain>ATCC 51521 / SW</strain>
    </source>
</reference>
<keyword id="KW-0378">Hydrolase</keyword>
<keyword id="KW-0460">Magnesium</keyword>
<keyword id="KW-0479">Metal-binding</keyword>
<keyword id="KW-0546">Nucleotide metabolism</keyword>
<keyword id="KW-1185">Reference proteome</keyword>
<sequence>MTDLSIAVTRLPHGADLPLPAYATEHAAGMDLLAAVAEPVILAPGERRLIPTGLAIALPDGYEAQVRPRSGLALKHGITLLNSPGTIDADYRGEVGVILANLGADPFTVERGMRIAQMVIARYARAAWDVVDSLPASARGSGGFGSTGTRG</sequence>
<organism>
    <name type="scientific">Rhodospirillum centenum (strain ATCC 51521 / SW)</name>
    <dbReference type="NCBI Taxonomy" id="414684"/>
    <lineage>
        <taxon>Bacteria</taxon>
        <taxon>Pseudomonadati</taxon>
        <taxon>Pseudomonadota</taxon>
        <taxon>Alphaproteobacteria</taxon>
        <taxon>Rhodospirillales</taxon>
        <taxon>Rhodospirillaceae</taxon>
        <taxon>Rhodospirillum</taxon>
    </lineage>
</organism>
<comment type="function">
    <text evidence="1">This enzyme is involved in nucleotide metabolism: it produces dUMP, the immediate precursor of thymidine nucleotides and it decreases the intracellular concentration of dUTP so that uracil cannot be incorporated into DNA.</text>
</comment>
<comment type="catalytic activity">
    <reaction evidence="1">
        <text>dUTP + H2O = dUMP + diphosphate + H(+)</text>
        <dbReference type="Rhea" id="RHEA:10248"/>
        <dbReference type="ChEBI" id="CHEBI:15377"/>
        <dbReference type="ChEBI" id="CHEBI:15378"/>
        <dbReference type="ChEBI" id="CHEBI:33019"/>
        <dbReference type="ChEBI" id="CHEBI:61555"/>
        <dbReference type="ChEBI" id="CHEBI:246422"/>
        <dbReference type="EC" id="3.6.1.23"/>
    </reaction>
</comment>
<comment type="cofactor">
    <cofactor evidence="1">
        <name>Mg(2+)</name>
        <dbReference type="ChEBI" id="CHEBI:18420"/>
    </cofactor>
</comment>
<comment type="pathway">
    <text evidence="1">Pyrimidine metabolism; dUMP biosynthesis; dUMP from dCTP (dUTP route): step 2/2.</text>
</comment>
<comment type="similarity">
    <text evidence="1">Belongs to the dUTPase family.</text>
</comment>
<protein>
    <recommendedName>
        <fullName evidence="1">Deoxyuridine 5'-triphosphate nucleotidohydrolase</fullName>
        <shortName evidence="1">dUTPase</shortName>
        <ecNumber evidence="1">3.6.1.23</ecNumber>
    </recommendedName>
    <alternativeName>
        <fullName evidence="1">dUTP pyrophosphatase</fullName>
    </alternativeName>
</protein>
<evidence type="ECO:0000255" key="1">
    <source>
        <dbReference type="HAMAP-Rule" id="MF_00116"/>
    </source>
</evidence>
<dbReference type="EC" id="3.6.1.23" evidence="1"/>
<dbReference type="EMBL" id="CP000613">
    <property type="protein sequence ID" value="ACJ00409.1"/>
    <property type="molecule type" value="Genomic_DNA"/>
</dbReference>
<dbReference type="RefSeq" id="WP_012568189.1">
    <property type="nucleotide sequence ID" value="NC_011420.2"/>
</dbReference>
<dbReference type="SMR" id="B6IVT5"/>
<dbReference type="STRING" id="414684.RC1_3043"/>
<dbReference type="KEGG" id="rce:RC1_3043"/>
<dbReference type="eggNOG" id="COG0756">
    <property type="taxonomic scope" value="Bacteria"/>
</dbReference>
<dbReference type="HOGENOM" id="CLU_068508_1_0_5"/>
<dbReference type="OrthoDB" id="9809956at2"/>
<dbReference type="UniPathway" id="UPA00610">
    <property type="reaction ID" value="UER00666"/>
</dbReference>
<dbReference type="Proteomes" id="UP000001591">
    <property type="component" value="Chromosome"/>
</dbReference>
<dbReference type="GO" id="GO:0004170">
    <property type="term" value="F:dUTP diphosphatase activity"/>
    <property type="evidence" value="ECO:0007669"/>
    <property type="project" value="UniProtKB-UniRule"/>
</dbReference>
<dbReference type="GO" id="GO:0000287">
    <property type="term" value="F:magnesium ion binding"/>
    <property type="evidence" value="ECO:0007669"/>
    <property type="project" value="UniProtKB-UniRule"/>
</dbReference>
<dbReference type="GO" id="GO:0006226">
    <property type="term" value="P:dUMP biosynthetic process"/>
    <property type="evidence" value="ECO:0007669"/>
    <property type="project" value="UniProtKB-UniRule"/>
</dbReference>
<dbReference type="GO" id="GO:0046081">
    <property type="term" value="P:dUTP catabolic process"/>
    <property type="evidence" value="ECO:0007669"/>
    <property type="project" value="InterPro"/>
</dbReference>
<dbReference type="CDD" id="cd07557">
    <property type="entry name" value="trimeric_dUTPase"/>
    <property type="match status" value="1"/>
</dbReference>
<dbReference type="FunFam" id="2.70.40.10:FF:000002">
    <property type="entry name" value="dUTP diphosphatase"/>
    <property type="match status" value="1"/>
</dbReference>
<dbReference type="Gene3D" id="2.70.40.10">
    <property type="match status" value="1"/>
</dbReference>
<dbReference type="HAMAP" id="MF_00116">
    <property type="entry name" value="dUTPase_bact"/>
    <property type="match status" value="1"/>
</dbReference>
<dbReference type="InterPro" id="IPR008181">
    <property type="entry name" value="dUTPase"/>
</dbReference>
<dbReference type="InterPro" id="IPR029054">
    <property type="entry name" value="dUTPase-like"/>
</dbReference>
<dbReference type="InterPro" id="IPR036157">
    <property type="entry name" value="dUTPase-like_sf"/>
</dbReference>
<dbReference type="InterPro" id="IPR033704">
    <property type="entry name" value="dUTPase_trimeric"/>
</dbReference>
<dbReference type="NCBIfam" id="TIGR00576">
    <property type="entry name" value="dut"/>
    <property type="match status" value="1"/>
</dbReference>
<dbReference type="NCBIfam" id="NF001862">
    <property type="entry name" value="PRK00601.1"/>
    <property type="match status" value="1"/>
</dbReference>
<dbReference type="PANTHER" id="PTHR11241">
    <property type="entry name" value="DEOXYURIDINE 5'-TRIPHOSPHATE NUCLEOTIDOHYDROLASE"/>
    <property type="match status" value="1"/>
</dbReference>
<dbReference type="PANTHER" id="PTHR11241:SF0">
    <property type="entry name" value="DEOXYURIDINE 5'-TRIPHOSPHATE NUCLEOTIDOHYDROLASE"/>
    <property type="match status" value="1"/>
</dbReference>
<dbReference type="Pfam" id="PF00692">
    <property type="entry name" value="dUTPase"/>
    <property type="match status" value="1"/>
</dbReference>
<dbReference type="SUPFAM" id="SSF51283">
    <property type="entry name" value="dUTPase-like"/>
    <property type="match status" value="1"/>
</dbReference>
<feature type="chain" id="PRO_1000094984" description="Deoxyuridine 5'-triphosphate nucleotidohydrolase">
    <location>
        <begin position="1"/>
        <end position="151"/>
    </location>
</feature>
<feature type="binding site" evidence="1">
    <location>
        <begin position="69"/>
        <end position="71"/>
    </location>
    <ligand>
        <name>substrate</name>
    </ligand>
</feature>
<feature type="binding site" evidence="1">
    <location>
        <position position="82"/>
    </location>
    <ligand>
        <name>substrate</name>
    </ligand>
</feature>
<feature type="binding site" evidence="1">
    <location>
        <begin position="86"/>
        <end position="88"/>
    </location>
    <ligand>
        <name>substrate</name>
    </ligand>
</feature>